<dbReference type="EMBL" id="EU262891">
    <property type="protein sequence ID" value="ABX10164.1"/>
    <property type="molecule type" value="Genomic_DNA"/>
</dbReference>
<dbReference type="EMBL" id="EU262891">
    <property type="protein sequence ID" value="ABX10181.1"/>
    <property type="molecule type" value="Genomic_DNA"/>
</dbReference>
<dbReference type="GO" id="GO:0009570">
    <property type="term" value="C:chloroplast stroma"/>
    <property type="evidence" value="ECO:0007669"/>
    <property type="project" value="UniProtKB-SubCell"/>
</dbReference>
<dbReference type="GO" id="GO:0005524">
    <property type="term" value="F:ATP binding"/>
    <property type="evidence" value="ECO:0007669"/>
    <property type="project" value="UniProtKB-KW"/>
</dbReference>
<dbReference type="GO" id="GO:0016887">
    <property type="term" value="F:ATP hydrolysis activity"/>
    <property type="evidence" value="ECO:0007669"/>
    <property type="project" value="InterPro"/>
</dbReference>
<dbReference type="CDD" id="cd19505">
    <property type="entry name" value="RecA-like_Ycf2"/>
    <property type="match status" value="1"/>
</dbReference>
<dbReference type="Gene3D" id="3.40.50.300">
    <property type="entry name" value="P-loop containing nucleotide triphosphate hydrolases"/>
    <property type="match status" value="1"/>
</dbReference>
<dbReference type="HAMAP" id="MF_01330">
    <property type="entry name" value="Ycf2"/>
    <property type="match status" value="1"/>
</dbReference>
<dbReference type="InterPro" id="IPR003593">
    <property type="entry name" value="AAA+_ATPase"/>
</dbReference>
<dbReference type="InterPro" id="IPR027417">
    <property type="entry name" value="P-loop_NTPase"/>
</dbReference>
<dbReference type="InterPro" id="IPR008543">
    <property type="entry name" value="Uncharacterised_Ycf2"/>
</dbReference>
<dbReference type="InterPro" id="IPR056777">
    <property type="entry name" value="Ycf2_N"/>
</dbReference>
<dbReference type="PANTHER" id="PTHR33078:SF92">
    <property type="entry name" value="PROTEIN YCF2"/>
    <property type="match status" value="1"/>
</dbReference>
<dbReference type="PANTHER" id="PTHR33078">
    <property type="entry name" value="PROTEIN YCF2-RELATED"/>
    <property type="match status" value="1"/>
</dbReference>
<dbReference type="Pfam" id="PF05695">
    <property type="entry name" value="Ycf2"/>
    <property type="match status" value="5"/>
</dbReference>
<dbReference type="SMART" id="SM00382">
    <property type="entry name" value="AAA"/>
    <property type="match status" value="1"/>
</dbReference>
<dbReference type="SUPFAM" id="SSF52540">
    <property type="entry name" value="P-loop containing nucleoside triphosphate hydrolases"/>
    <property type="match status" value="1"/>
</dbReference>
<comment type="function">
    <text evidence="1">Probable ATPase of unknown function. Its presence in a non-photosynthetic plant (Epifagus virginiana) and experiments in tobacco indicate that it has an essential function which is probably not related to photosynthesis.</text>
</comment>
<comment type="subcellular location">
    <subcellularLocation>
        <location evidence="1">Plastid</location>
        <location evidence="1">Chloroplast stroma</location>
    </subcellularLocation>
</comment>
<comment type="similarity">
    <text evidence="1">Belongs to the Ycf2 family.</text>
</comment>
<protein>
    <recommendedName>
        <fullName evidence="1">Protein Ycf2</fullName>
    </recommendedName>
</protein>
<name>YCF2_OENPA</name>
<sequence length="2312" mass="269913">MGNQRNRVNLNPFRFWVFELREILREIKNYRYLGPFNSVGSFIHIFVHQERFLKLLDPRIWSVLRSQGSTGVVLFLVAVLIYRINNRNMIERKNIYLTGLLPIPTNFAGPRNETLEESFLSSNINRLIVSLLHLPKGKRLSESCFLDPKESTRVLPITKWRNWIGKRRDSSQLKGSSDQSRDHFDSIGTEDSEYHTLINQREIQQRKERSSLLDPSFLQTERTEIESDRFSKGLSGSSSKSRLFTEGEKEMNNHLPPEEIEEFLGNPTRSILSFFSDEWSELHLGSNPTERSTVDQKLLKKEQEVSFAPFRRSETKEIVNLFKTMAYLQKTVSIHPISSDPGCDMVPKDELDSEERFQEMADLFTLSITEPDLVYHKGFAFSIDSSVLDQKQFLAEARDESKKKSLLVLPPVFYQENESFYRRIRKRGVQISCGNDLEDPKPKIVVFASNNIVEAVNQYRWIRNLIQIQYSTHGYIRNVLNRFFLMNRSDRNFEYGIQRDQIGNDTLNHRTFMKYTINQHLSNLKKSQKKGSDPLILISRTERSVNRDPNAYRYKWSKGSKNFQEHLEHFVSEQKSRFQVVFDRYRSIRNRYRSRINQYSSDRSEVSDKKDNRYRSRINQYSSDRSEVSDKKNLAKFRSFVFSKLLLFLSNSLPFFFVSFGNTPPIQRSEIRVSELKGPNDRLCNQFLESIGLQLVYLKKLKPFLLDDHETSQKSKLLFNKKPEGMIDSFHTRNNRGKSLDSYFSMISHDQDNWLNPVKPFHRSSLISSFYKANRLRFLNNPHDFGFFCNKRFPFYVDIKNLDFTYGQFLNILFIRNTKFSLCGDKKKHAFLERDTISSIESQVSNLFKDFPQSGDERYNFYKYFHLAMRSDPLVRRAIYSIADISGTPLTEGQRVNFERTYCQPLSDMNLSDSEGKNLYQYLNFNSNMGLIYSEKCFSSEKRKKKKPEKRKEKKPEKRKEKKPEKRKEKKPEKRKEKKPEKRKEKKPEKRKEKKPEKRKEKKPEKRKEKKQSLYLKQWVEKVQMDRALQGERVSLILSNWNLFKTYVMPFSLTSTGYNLLKLMFLDTLGSYVMPLLRSSPKFVSICYAISDPCGISWRILQKKWCLLQWNWISAISNKCFHKLLLSEESIHRNNESPSMTDLRWPNLGEFLYSILFLLLVAGHLVFSHLLFFSQAFSELQRDFARAQSLMIPSYIVELRELLDMYPAPRSFKKLFLAAREKLVNYLRWGGGRKSFLIHLFELLNITPNPIDRIAFLKNTRHLSHTSKELYSLITELGDFSSLCSGQRYRYDQIIENVNGPCCLIDDKIESWISNCDAIEDKEREFLVPFCNFTRETRIDQILLSLTHSDHLSNNDSASQMSEEPGAFYLRHLVDIHKKGLMNYECNTSCLAERRIFLAHYQTITYSPCGDNRSHFPSHGKTFSLRLPLHPSRATLVIGSIGSGRSYLVKSLATNSYVPLITVVLNKFLKNWTPQGFDIHESGVYDEYGDDAEEANDYGASFFDFLDNDSDDYEDRDSDDYEPGASDDYEPGDMEDFVDSEMTEWLTKTNVPLVYQLLDDEIDEFYITLQFELAKAMSPCILWIPNIHDLDAKESDYLSLGLLVNHLSRDCGRRSTKNEILVIASTHIPQKVDPSLIGPDGLSTCIKTRRLLVPQQQQCLFTLSYTRGFHLENKMFHTHTNEFESTILGPSVPDLVALTNEALSISITQKKSIIDTTTIRYALHRKTWDLEADRNLSPAKEHGTLFYQVGRAFAHTVLLRNCPIDPISIYIKKNLCEAGDSSLYKWYFELGTSMKKLTILLYLLTCSAGSIAQDLLSPPGPDEQNLITSYGLVENDSDLVHGLSDIVHGLLELEGALVGSSPTEEEVEGTEEEVEGTEEEVEGTEEEVEGTEEEVEGTEEEVEGTEEEVEGTEDEEVEGTEEEVEGTEDEEVEGTEEEVEGTEEEVEGTEDEEGEGTEDEEVEGTEKDSSQFDNDRVTLLLRPKPRNPLDIQRLIYQHQKYESELEEDDDDDEDVFAPQKMLEDLFSELVWSPRIWHPWDFILDCEAEIPAEEIPEEEDPLPEEALETEVAVWGEEEEGEADDEEDERLEAQQEDELLEEEDEELKEEEDELHEEEEEEEEEEEEEDELHEEEEEEEEEEEDELQENDSEFFRSETQQPQARDGFSEEEGCFRISQFMWVPGDPLSFLYKDTPFVEVLSYPEEATEISKELLRLLNPKTKRDAPKRARQRWWTKKKQDKHYELVLDRQRWLITKSSLSKSNGFFRSNTPSESYQYLSNLFLSNRRLLDQMTKTFFRKKWLFPDEMKIGFMEQ</sequence>
<reference key="1">
    <citation type="journal article" date="2008" name="Nucleic Acids Res.">
        <title>The complete nucleotide sequences of the five genetically distinct plastid genomes of Oenothera, subsection Oenothera: I. Sequence evaluation and plastome evolution.</title>
        <authorList>
            <person name="Greiner S."/>
            <person name="Wang X."/>
            <person name="Rauwolf U."/>
            <person name="Silber M.V."/>
            <person name="Mayer K."/>
            <person name="Meurer J."/>
            <person name="Haberer G."/>
            <person name="Herrmann R.G."/>
        </authorList>
    </citation>
    <scope>NUCLEOTIDE SEQUENCE [LARGE SCALE GENOMIC DNA]</scope>
    <source>
        <strain>cv. Atrovirens</strain>
    </source>
</reference>
<proteinExistence type="inferred from homology"/>
<accession>B0Z5H1</accession>
<keyword id="KW-0067">ATP-binding</keyword>
<keyword id="KW-0150">Chloroplast</keyword>
<keyword id="KW-0547">Nucleotide-binding</keyword>
<keyword id="KW-0934">Plastid</keyword>
<geneLocation type="chloroplast"/>
<organism>
    <name type="scientific">Oenothera parviflora</name>
    <name type="common">Small-flowered evening primrose</name>
    <name type="synonym">Oenothera cruciata</name>
    <dbReference type="NCBI Taxonomy" id="482429"/>
    <lineage>
        <taxon>Eukaryota</taxon>
        <taxon>Viridiplantae</taxon>
        <taxon>Streptophyta</taxon>
        <taxon>Embryophyta</taxon>
        <taxon>Tracheophyta</taxon>
        <taxon>Spermatophyta</taxon>
        <taxon>Magnoliopsida</taxon>
        <taxon>eudicotyledons</taxon>
        <taxon>Gunneridae</taxon>
        <taxon>Pentapetalae</taxon>
        <taxon>rosids</taxon>
        <taxon>malvids</taxon>
        <taxon>Myrtales</taxon>
        <taxon>Onagraceae</taxon>
        <taxon>Onagroideae</taxon>
        <taxon>Onagreae</taxon>
        <taxon>Oenothera</taxon>
    </lineage>
</organism>
<evidence type="ECO:0000255" key="1">
    <source>
        <dbReference type="HAMAP-Rule" id="MF_01330"/>
    </source>
</evidence>
<evidence type="ECO:0000256" key="2">
    <source>
        <dbReference type="SAM" id="MobiDB-lite"/>
    </source>
</evidence>
<gene>
    <name evidence="1" type="primary">ycf2-A</name>
</gene>
<gene>
    <name evidence="1" type="primary">ycf2-B</name>
</gene>
<feature type="chain" id="PRO_0000343786" description="Protein Ycf2">
    <location>
        <begin position="1"/>
        <end position="2312"/>
    </location>
</feature>
<feature type="region of interest" description="Disordered" evidence="2">
    <location>
        <begin position="170"/>
        <end position="191"/>
    </location>
</feature>
<feature type="region of interest" description="Disordered" evidence="2">
    <location>
        <begin position="223"/>
        <end position="253"/>
    </location>
</feature>
<feature type="region of interest" description="Disordered" evidence="2">
    <location>
        <begin position="942"/>
        <end position="1009"/>
    </location>
</feature>
<feature type="region of interest" description="Disordered" evidence="2">
    <location>
        <begin position="1513"/>
        <end position="1532"/>
    </location>
</feature>
<feature type="region of interest" description="Disordered" evidence="2">
    <location>
        <begin position="1857"/>
        <end position="1983"/>
    </location>
</feature>
<feature type="region of interest" description="Disordered" evidence="2">
    <location>
        <begin position="2050"/>
        <end position="2166"/>
    </location>
</feature>
<feature type="compositionally biased region" description="Low complexity" evidence="2">
    <location>
        <begin position="232"/>
        <end position="242"/>
    </location>
</feature>
<feature type="compositionally biased region" description="Basic and acidic residues" evidence="2">
    <location>
        <begin position="243"/>
        <end position="252"/>
    </location>
</feature>
<feature type="compositionally biased region" description="Basic and acidic residues" evidence="2">
    <location>
        <begin position="950"/>
        <end position="1007"/>
    </location>
</feature>
<feature type="compositionally biased region" description="Acidic residues" evidence="2">
    <location>
        <begin position="1863"/>
        <end position="1963"/>
    </location>
</feature>
<feature type="compositionally biased region" description="Basic and acidic residues" evidence="2">
    <location>
        <begin position="1964"/>
        <end position="1976"/>
    </location>
</feature>
<feature type="compositionally biased region" description="Acidic residues" evidence="2">
    <location>
        <begin position="2050"/>
        <end position="2067"/>
    </location>
</feature>
<feature type="compositionally biased region" description="Acidic residues" evidence="2">
    <location>
        <begin position="2074"/>
        <end position="2149"/>
    </location>
</feature>
<feature type="binding site" evidence="1">
    <location>
        <begin position="1439"/>
        <end position="1446"/>
    </location>
    <ligand>
        <name>ATP</name>
        <dbReference type="ChEBI" id="CHEBI:30616"/>
    </ligand>
</feature>